<feature type="chain" id="PRO_0000420521" description="Dihydrolipoyllysine-residue acetyltransferase component of pyruvate dehydrogenase complex">
    <location>
        <begin position="1"/>
        <end position="675"/>
    </location>
</feature>
<feature type="domain" description="Lipoyl-binding 1" evidence="2">
    <location>
        <begin position="2"/>
        <end position="77"/>
    </location>
</feature>
<feature type="domain" description="Lipoyl-binding 2" evidence="2">
    <location>
        <begin position="121"/>
        <end position="196"/>
    </location>
</feature>
<feature type="domain" description="Lipoyl-binding 3" evidence="2">
    <location>
        <begin position="237"/>
        <end position="312"/>
    </location>
</feature>
<feature type="domain" description="Peripheral subunit-binding (PSBD)" evidence="3">
    <location>
        <begin position="372"/>
        <end position="409"/>
    </location>
</feature>
<feature type="region of interest" description="Disordered" evidence="4">
    <location>
        <begin position="77"/>
        <end position="124"/>
    </location>
</feature>
<feature type="region of interest" description="Disordered" evidence="4">
    <location>
        <begin position="200"/>
        <end position="240"/>
    </location>
</feature>
<feature type="region of interest" description="Disordered" evidence="4">
    <location>
        <begin position="316"/>
        <end position="368"/>
    </location>
</feature>
<feature type="compositionally biased region" description="Low complexity" evidence="4">
    <location>
        <begin position="84"/>
        <end position="95"/>
    </location>
</feature>
<feature type="compositionally biased region" description="Low complexity" evidence="4">
    <location>
        <begin position="112"/>
        <end position="124"/>
    </location>
</feature>
<feature type="compositionally biased region" description="Acidic residues" evidence="4">
    <location>
        <begin position="205"/>
        <end position="218"/>
    </location>
</feature>
<feature type="compositionally biased region" description="Acidic residues" evidence="4">
    <location>
        <begin position="321"/>
        <end position="334"/>
    </location>
</feature>
<feature type="compositionally biased region" description="Basic and acidic residues" evidence="4">
    <location>
        <begin position="335"/>
        <end position="352"/>
    </location>
</feature>
<feature type="compositionally biased region" description="Low complexity" evidence="4">
    <location>
        <begin position="353"/>
        <end position="366"/>
    </location>
</feature>
<feature type="active site" evidence="1">
    <location>
        <position position="645"/>
    </location>
</feature>
<feature type="active site" evidence="1">
    <location>
        <position position="649"/>
    </location>
</feature>
<feature type="modified residue" description="N6-lipoyllysine" evidence="2 8">
    <location>
        <position position="43"/>
    </location>
</feature>
<feature type="modified residue" description="N6-lipoyllysine" evidence="2 8">
    <location>
        <position position="162"/>
    </location>
</feature>
<feature type="modified residue" description="N6-lipoyllysine" evidence="2 8">
    <location>
        <position position="278"/>
    </location>
</feature>
<feature type="mutagenesis site" description="No effect on ODH and PDH activity; when associated with Q-162." evidence="6">
    <original>K</original>
    <variation>Q</variation>
    <location>
        <position position="43"/>
    </location>
</feature>
<feature type="mutagenesis site" description="No effect on ODH and PDH activity; when associated with Q-43. Strong reduction in the catalytic efficiency of ODH and slight reduction in that of PDH; when associated with Q-278." evidence="6">
    <original>K</original>
    <variation>Q</variation>
    <location>
        <position position="162"/>
    </location>
</feature>
<feature type="mutagenesis site" description="Strong reduction in the catalytic efficiency of ODH and slight reduction in that of PDH; when associated with Q-162." evidence="6">
    <original>K</original>
    <variation>Q</variation>
    <location>
        <position position="278"/>
    </location>
</feature>
<feature type="strand" evidence="11">
    <location>
        <begin position="423"/>
        <end position="425"/>
    </location>
</feature>
<feature type="helix" evidence="11">
    <location>
        <begin position="432"/>
        <end position="436"/>
    </location>
</feature>
<feature type="turn" evidence="11">
    <location>
        <begin position="437"/>
        <end position="439"/>
    </location>
</feature>
<feature type="strand" evidence="9">
    <location>
        <begin position="441"/>
        <end position="443"/>
    </location>
</feature>
<feature type="helix" evidence="10">
    <location>
        <begin position="446"/>
        <end position="460"/>
    </location>
</feature>
<feature type="strand" evidence="10">
    <location>
        <begin position="464"/>
        <end position="472"/>
    </location>
</feature>
<feature type="helix" evidence="10">
    <location>
        <begin position="474"/>
        <end position="491"/>
    </location>
</feature>
<feature type="helix" evidence="10">
    <location>
        <begin position="498"/>
        <end position="511"/>
    </location>
</feature>
<feature type="turn" evidence="10">
    <location>
        <begin position="513"/>
        <end position="515"/>
    </location>
</feature>
<feature type="strand" evidence="10">
    <location>
        <begin position="516"/>
        <end position="520"/>
    </location>
</feature>
<feature type="turn" evidence="10">
    <location>
        <begin position="521"/>
        <end position="524"/>
    </location>
</feature>
<feature type="strand" evidence="10">
    <location>
        <begin position="525"/>
        <end position="528"/>
    </location>
</feature>
<feature type="strand" evidence="10">
    <location>
        <begin position="534"/>
        <end position="536"/>
    </location>
</feature>
<feature type="strand" evidence="9">
    <location>
        <begin position="538"/>
        <end position="540"/>
    </location>
</feature>
<feature type="strand" evidence="9">
    <location>
        <begin position="543"/>
        <end position="545"/>
    </location>
</feature>
<feature type="helix" evidence="10">
    <location>
        <begin position="552"/>
        <end position="554"/>
    </location>
</feature>
<feature type="helix" evidence="10">
    <location>
        <begin position="557"/>
        <end position="572"/>
    </location>
</feature>
<feature type="helix" evidence="10">
    <location>
        <begin position="578"/>
        <end position="581"/>
    </location>
</feature>
<feature type="strand" evidence="10">
    <location>
        <begin position="585"/>
        <end position="589"/>
    </location>
</feature>
<feature type="helix" evidence="10">
    <location>
        <begin position="591"/>
        <end position="594"/>
    </location>
</feature>
<feature type="strand" evidence="10">
    <location>
        <begin position="609"/>
        <end position="612"/>
    </location>
</feature>
<feature type="strand" evidence="10">
    <location>
        <begin position="617"/>
        <end position="625"/>
    </location>
</feature>
<feature type="strand" evidence="10">
    <location>
        <begin position="628"/>
        <end position="644"/>
    </location>
</feature>
<feature type="turn" evidence="10">
    <location>
        <begin position="645"/>
        <end position="647"/>
    </location>
</feature>
<feature type="helix" evidence="10">
    <location>
        <begin position="650"/>
        <end position="666"/>
    </location>
</feature>
<feature type="helix" evidence="10">
    <location>
        <begin position="671"/>
        <end position="673"/>
    </location>
</feature>
<evidence type="ECO:0000250" key="1"/>
<evidence type="ECO:0000255" key="2">
    <source>
        <dbReference type="PROSITE-ProRule" id="PRU01066"/>
    </source>
</evidence>
<evidence type="ECO:0000255" key="3">
    <source>
        <dbReference type="PROSITE-ProRule" id="PRU01170"/>
    </source>
</evidence>
<evidence type="ECO:0000256" key="4">
    <source>
        <dbReference type="SAM" id="MobiDB-lite"/>
    </source>
</evidence>
<evidence type="ECO:0000269" key="5">
    <source>
    </source>
</evidence>
<evidence type="ECO:0000269" key="6">
    <source>
    </source>
</evidence>
<evidence type="ECO:0000305" key="7"/>
<evidence type="ECO:0000305" key="8">
    <source>
    </source>
</evidence>
<evidence type="ECO:0007829" key="9">
    <source>
        <dbReference type="PDB" id="6ZZI"/>
    </source>
</evidence>
<evidence type="ECO:0007829" key="10">
    <source>
        <dbReference type="PDB" id="6ZZJ"/>
    </source>
</evidence>
<evidence type="ECO:0007829" key="11">
    <source>
        <dbReference type="PDB" id="6ZZL"/>
    </source>
</evidence>
<accession>Q8NNJ2</accession>
<accession>Q6M3N0</accession>
<dbReference type="EC" id="2.3.1.12"/>
<dbReference type="EMBL" id="BA000036">
    <property type="protein sequence ID" value="BAB99600.1"/>
    <property type="molecule type" value="Genomic_DNA"/>
</dbReference>
<dbReference type="EMBL" id="BX927154">
    <property type="protein sequence ID" value="CAF20547.1"/>
    <property type="molecule type" value="Genomic_DNA"/>
</dbReference>
<dbReference type="RefSeq" id="NP_601410.1">
    <property type="nucleotide sequence ID" value="NC_003450.3"/>
</dbReference>
<dbReference type="RefSeq" id="WP_011014958.1">
    <property type="nucleotide sequence ID" value="NC_006958.1"/>
</dbReference>
<dbReference type="PDB" id="6ZZI">
    <property type="method" value="X-ray"/>
    <property type="resolution" value="1.93 A"/>
    <property type="chains" value="A/B/C/D/E/F=437-675"/>
</dbReference>
<dbReference type="PDB" id="6ZZJ">
    <property type="method" value="X-ray"/>
    <property type="resolution" value="1.35 A"/>
    <property type="chains" value="A=437-675"/>
</dbReference>
<dbReference type="PDB" id="6ZZK">
    <property type="method" value="X-ray"/>
    <property type="resolution" value="2.09 A"/>
    <property type="chains" value="A/B=437-675"/>
</dbReference>
<dbReference type="PDB" id="6ZZL">
    <property type="method" value="X-ray"/>
    <property type="resolution" value="2.23 A"/>
    <property type="chains" value="A/B/C=367-675"/>
</dbReference>
<dbReference type="PDBsum" id="6ZZI"/>
<dbReference type="PDBsum" id="6ZZJ"/>
<dbReference type="PDBsum" id="6ZZK"/>
<dbReference type="PDBsum" id="6ZZL"/>
<dbReference type="SMR" id="Q8NNJ2"/>
<dbReference type="STRING" id="196627.cg2421"/>
<dbReference type="GeneID" id="1020158"/>
<dbReference type="KEGG" id="cgb:cg2421"/>
<dbReference type="KEGG" id="cgl:Cgl2207"/>
<dbReference type="PATRIC" id="fig|196627.13.peg.2142"/>
<dbReference type="eggNOG" id="COG0508">
    <property type="taxonomic scope" value="Bacteria"/>
</dbReference>
<dbReference type="HOGENOM" id="CLU_016733_10_1_11"/>
<dbReference type="OrthoDB" id="9805770at2"/>
<dbReference type="BioCyc" id="CORYNE:G18NG-11799-MONOMER"/>
<dbReference type="BRENDA" id="1.2.1.104">
    <property type="organism ID" value="960"/>
</dbReference>
<dbReference type="BRENDA" id="1.2.1.105">
    <property type="organism ID" value="960"/>
</dbReference>
<dbReference type="BRENDA" id="2.3.1.61">
    <property type="organism ID" value="960"/>
</dbReference>
<dbReference type="SABIO-RK" id="Q8NNJ2"/>
<dbReference type="Proteomes" id="UP000000582">
    <property type="component" value="Chromosome"/>
</dbReference>
<dbReference type="Proteomes" id="UP000001009">
    <property type="component" value="Chromosome"/>
</dbReference>
<dbReference type="GO" id="GO:0005737">
    <property type="term" value="C:cytoplasm"/>
    <property type="evidence" value="ECO:0007669"/>
    <property type="project" value="TreeGrafter"/>
</dbReference>
<dbReference type="GO" id="GO:0004742">
    <property type="term" value="F:dihydrolipoyllysine-residue acetyltransferase activity"/>
    <property type="evidence" value="ECO:0007669"/>
    <property type="project" value="UniProtKB-EC"/>
</dbReference>
<dbReference type="GO" id="GO:0031405">
    <property type="term" value="F:lipoic acid binding"/>
    <property type="evidence" value="ECO:0007669"/>
    <property type="project" value="TreeGrafter"/>
</dbReference>
<dbReference type="CDD" id="cd06849">
    <property type="entry name" value="lipoyl_domain"/>
    <property type="match status" value="3"/>
</dbReference>
<dbReference type="FunFam" id="2.40.50.100:FF:000023">
    <property type="entry name" value="Dihydrolipoamide acetyltransferase component of pyruvate dehydrogenase complex"/>
    <property type="match status" value="1"/>
</dbReference>
<dbReference type="FunFam" id="3.30.559.10:FF:000007">
    <property type="entry name" value="Dihydrolipoamide acetyltransferase component of pyruvate dehydrogenase complex"/>
    <property type="match status" value="1"/>
</dbReference>
<dbReference type="Gene3D" id="2.40.50.100">
    <property type="match status" value="3"/>
</dbReference>
<dbReference type="Gene3D" id="3.30.559.10">
    <property type="entry name" value="Chloramphenicol acetyltransferase-like domain"/>
    <property type="match status" value="1"/>
</dbReference>
<dbReference type="Gene3D" id="4.10.320.10">
    <property type="entry name" value="E3-binding domain"/>
    <property type="match status" value="1"/>
</dbReference>
<dbReference type="InterPro" id="IPR003016">
    <property type="entry name" value="2-oxoA_DH_lipoyl-BS"/>
</dbReference>
<dbReference type="InterPro" id="IPR001078">
    <property type="entry name" value="2-oxoacid_DH_actylTfrase"/>
</dbReference>
<dbReference type="InterPro" id="IPR050743">
    <property type="entry name" value="2-oxoacid_DH_E2_comp"/>
</dbReference>
<dbReference type="InterPro" id="IPR014276">
    <property type="entry name" value="2-oxoglutarate_DH_E2"/>
</dbReference>
<dbReference type="InterPro" id="IPR000089">
    <property type="entry name" value="Biotin_lipoyl"/>
</dbReference>
<dbReference type="InterPro" id="IPR023213">
    <property type="entry name" value="CAT-like_dom_sf"/>
</dbReference>
<dbReference type="InterPro" id="IPR036625">
    <property type="entry name" value="E3-bd_dom_sf"/>
</dbReference>
<dbReference type="InterPro" id="IPR004167">
    <property type="entry name" value="PSBD"/>
</dbReference>
<dbReference type="InterPro" id="IPR011053">
    <property type="entry name" value="Single_hybrid_motif"/>
</dbReference>
<dbReference type="NCBIfam" id="NF008814">
    <property type="entry name" value="PRK11854.1"/>
    <property type="match status" value="1"/>
</dbReference>
<dbReference type="NCBIfam" id="TIGR02927">
    <property type="entry name" value="SucB_Actino"/>
    <property type="match status" value="1"/>
</dbReference>
<dbReference type="PANTHER" id="PTHR43178">
    <property type="entry name" value="DIHYDROLIPOAMIDE ACETYLTRANSFERASE COMPONENT OF PYRUVATE DEHYDROGENASE COMPLEX"/>
    <property type="match status" value="1"/>
</dbReference>
<dbReference type="PANTHER" id="PTHR43178:SF5">
    <property type="entry name" value="LIPOAMIDE ACYLTRANSFERASE COMPONENT OF BRANCHED-CHAIN ALPHA-KETO ACID DEHYDROGENASE COMPLEX, MITOCHONDRIAL"/>
    <property type="match status" value="1"/>
</dbReference>
<dbReference type="Pfam" id="PF00198">
    <property type="entry name" value="2-oxoacid_dh"/>
    <property type="match status" value="1"/>
</dbReference>
<dbReference type="Pfam" id="PF00364">
    <property type="entry name" value="Biotin_lipoyl"/>
    <property type="match status" value="3"/>
</dbReference>
<dbReference type="Pfam" id="PF02817">
    <property type="entry name" value="E3_binding"/>
    <property type="match status" value="1"/>
</dbReference>
<dbReference type="SUPFAM" id="SSF52777">
    <property type="entry name" value="CoA-dependent acyltransferases"/>
    <property type="match status" value="1"/>
</dbReference>
<dbReference type="SUPFAM" id="SSF47005">
    <property type="entry name" value="Peripheral subunit-binding domain of 2-oxo acid dehydrogenase complex"/>
    <property type="match status" value="1"/>
</dbReference>
<dbReference type="SUPFAM" id="SSF51230">
    <property type="entry name" value="Single hybrid motif"/>
    <property type="match status" value="3"/>
</dbReference>
<dbReference type="PROSITE" id="PS50968">
    <property type="entry name" value="BIOTINYL_LIPOYL"/>
    <property type="match status" value="3"/>
</dbReference>
<dbReference type="PROSITE" id="PS00189">
    <property type="entry name" value="LIPOYL"/>
    <property type="match status" value="3"/>
</dbReference>
<dbReference type="PROSITE" id="PS51826">
    <property type="entry name" value="PSBD"/>
    <property type="match status" value="1"/>
</dbReference>
<gene>
    <name type="primary">aceF</name>
    <name type="synonym">sucB</name>
    <name type="ordered locus">Cgl2207</name>
    <name type="ordered locus">cg2421</name>
</gene>
<keyword id="KW-0002">3D-structure</keyword>
<keyword id="KW-0012">Acyltransferase</keyword>
<keyword id="KW-0450">Lipoyl</keyword>
<keyword id="KW-1185">Reference proteome</keyword>
<keyword id="KW-0677">Repeat</keyword>
<keyword id="KW-0808">Transferase</keyword>
<name>ODP2_CORGL</name>
<comment type="function">
    <text evidence="6">Is essential for both 2-oxoglutarate dehydrogenase (ODH) and pyruvate dehydrogenase (PDH) activities, but AceF has exclusively transacetylase (and no transsuccinylase) activity. The lipoyl residues required for ODH activity are likely provided by AceF.</text>
</comment>
<comment type="catalytic activity">
    <reaction evidence="6">
        <text>N(6)-[(R)-dihydrolipoyl]-L-lysyl-[protein] + acetyl-CoA = N(6)-[(R)-S(8)-acetyldihydrolipoyl]-L-lysyl-[protein] + CoA</text>
        <dbReference type="Rhea" id="RHEA:17017"/>
        <dbReference type="Rhea" id="RHEA-COMP:10475"/>
        <dbReference type="Rhea" id="RHEA-COMP:10478"/>
        <dbReference type="ChEBI" id="CHEBI:57287"/>
        <dbReference type="ChEBI" id="CHEBI:57288"/>
        <dbReference type="ChEBI" id="CHEBI:83100"/>
        <dbReference type="ChEBI" id="CHEBI:83111"/>
        <dbReference type="EC" id="2.3.1.12"/>
    </reaction>
</comment>
<comment type="cofactor">
    <cofactor evidence="8">
        <name>(R)-lipoate</name>
        <dbReference type="ChEBI" id="CHEBI:83088"/>
    </cofactor>
    <text evidence="8">Binds 3 lipoyl cofactors covalently.</text>
</comment>
<comment type="subunit">
    <text evidence="1 5">Forms a 24-polypeptide structural core with octahedral symmetry (By similarity). Part of an unusual ODH/PDH supercomplex, consisting of AceE (E1), AceF (E2), and Lpd (E3) together with OdhA (E1+E2).</text>
</comment>
<comment type="disruption phenotype">
    <text evidence="6">Cells lacking this gene display no ODH and no PDH activities.</text>
</comment>
<comment type="miscellaneous">
    <text>Is the only lipoylated protein in C.glutamicum.</text>
</comment>
<comment type="similarity">
    <text evidence="7">Belongs to the 2-oxoacid dehydrogenase family.</text>
</comment>
<reference key="1">
    <citation type="journal article" date="2003" name="Appl. Microbiol. Biotechnol.">
        <title>The Corynebacterium glutamicum genome: features and impacts on biotechnological processes.</title>
        <authorList>
            <person name="Ikeda M."/>
            <person name="Nakagawa S."/>
        </authorList>
    </citation>
    <scope>NUCLEOTIDE SEQUENCE [LARGE SCALE GENOMIC DNA]</scope>
    <source>
        <strain>ATCC 13032 / DSM 20300 / JCM 1318 / BCRC 11384 / CCUG 27702 / LMG 3730 / NBRC 12168 / NCIMB 10025 / NRRL B-2784 / 534</strain>
    </source>
</reference>
<reference key="2">
    <citation type="journal article" date="2003" name="J. Biotechnol.">
        <title>The complete Corynebacterium glutamicum ATCC 13032 genome sequence and its impact on the production of L-aspartate-derived amino acids and vitamins.</title>
        <authorList>
            <person name="Kalinowski J."/>
            <person name="Bathe B."/>
            <person name="Bartels D."/>
            <person name="Bischoff N."/>
            <person name="Bott M."/>
            <person name="Burkovski A."/>
            <person name="Dusch N."/>
            <person name="Eggeling L."/>
            <person name="Eikmanns B.J."/>
            <person name="Gaigalat L."/>
            <person name="Goesmann A."/>
            <person name="Hartmann M."/>
            <person name="Huthmacher K."/>
            <person name="Kraemer R."/>
            <person name="Linke B."/>
            <person name="McHardy A.C."/>
            <person name="Meyer F."/>
            <person name="Moeckel B."/>
            <person name="Pfefferle W."/>
            <person name="Puehler A."/>
            <person name="Rey D.A."/>
            <person name="Rueckert C."/>
            <person name="Rupp O."/>
            <person name="Sahm H."/>
            <person name="Wendisch V.F."/>
            <person name="Wiegraebe I."/>
            <person name="Tauch A."/>
        </authorList>
    </citation>
    <scope>NUCLEOTIDE SEQUENCE [LARGE SCALE GENOMIC DNA]</scope>
    <source>
        <strain>ATCC 13032 / DSM 20300 / JCM 1318 / BCRC 11384 / CCUG 27702 / LMG 3730 / NBRC 12168 / NCIMB 10025 / NRRL B-2784 / 534</strain>
    </source>
</reference>
<reference key="3">
    <citation type="journal article" date="2006" name="J. Biol. Chem.">
        <title>Corynebacterial protein kinase G controls 2-oxoglutarate dehydrogenase activity via the phosphorylation status of the OdhI protein.</title>
        <authorList>
            <person name="Niebisch A."/>
            <person name="Kabus A."/>
            <person name="Schultz C."/>
            <person name="Weil B."/>
            <person name="Bott M."/>
        </authorList>
    </citation>
    <scope>IDENTIFICATION IN THE ODH/PDH COMPLEX</scope>
    <source>
        <strain>ATCC 13032 / DSM 20300 / JCM 1318 / BCRC 11384 / CCUG 27702 / LMG 3730 / NBRC 12168 / NCIMB 10025 / NRRL B-2784 / 534</strain>
    </source>
</reference>
<reference key="4">
    <citation type="journal article" date="2010" name="J. Bacteriol.">
        <title>The E2 domain of OdhA of Corynebacterium glutamicum has succinyltransferase activity dependent on lipoyl residues of the acetyltransferase AceF.</title>
        <authorList>
            <person name="Hoffelder M."/>
            <person name="Raasch K."/>
            <person name="van Ooyen J."/>
            <person name="Eggeling L."/>
        </authorList>
    </citation>
    <scope>FUNCTION</scope>
    <scope>CATALYTIC ACTIVITY</scope>
    <scope>DISRUPTION PHENOTYPE</scope>
    <scope>COFACTOR</scope>
    <scope>LIPOYLATION AT LYS-43; LYS-162 AND LYS-278</scope>
    <scope>MUTAGENESIS OF LYS-43; LYS-162 AND LYS-278</scope>
    <source>
        <strain>ATCC 13032 / DSM 20300 / JCM 1318 / BCRC 11384 / CCUG 27702 / LMG 3730 / NBRC 12168 / NCIMB 10025 / NRRL B-2784 / 534</strain>
    </source>
</reference>
<proteinExistence type="evidence at protein level"/>
<organism>
    <name type="scientific">Corynebacterium glutamicum (strain ATCC 13032 / DSM 20300 / JCM 1318 / BCRC 11384 / CCUG 27702 / LMG 3730 / NBRC 12168 / NCIMB 10025 / NRRL B-2784 / 534)</name>
    <dbReference type="NCBI Taxonomy" id="196627"/>
    <lineage>
        <taxon>Bacteria</taxon>
        <taxon>Bacillati</taxon>
        <taxon>Actinomycetota</taxon>
        <taxon>Actinomycetes</taxon>
        <taxon>Mycobacteriales</taxon>
        <taxon>Corynebacteriaceae</taxon>
        <taxon>Corynebacterium</taxon>
    </lineage>
</organism>
<protein>
    <recommendedName>
        <fullName>Dihydrolipoyllysine-residue acetyltransferase component of pyruvate dehydrogenase complex</fullName>
        <ecNumber>2.3.1.12</ecNumber>
    </recommendedName>
    <alternativeName>
        <fullName>Dihydrolipoamide acetyltransferase component of pyruvate dehydrogenase complex</fullName>
    </alternativeName>
    <alternativeName>
        <fullName>Pyruvate dehydrogenase complex component E2</fullName>
        <shortName>PDH component E2</shortName>
    </alternativeName>
</protein>
<sequence length="675" mass="70905">MAFSVEMPELGESVTEGTITQWLKSVGDTVEVDEPLLEVSTDKVDTEIPSPVAGVILEIKAEEDDTVDVGGVIAIIGDADETPANEAPADEAPAPAEEEEPVKEEPKKEAAPEAPAATGAATDVEMPELGESVTEGTITQWLKAVGDTVEVDEPLLEVSTDKVDTEIPSPVAGTIVEILADEDDTVDVGAVIARIGDANAAAAPAEEEAAPAEEEEPVKEEPKKEAAPEAPAATGAATDVEMPELGESVTEGTITQWLKAVGDTVEVDEPLLEVSTDKVDTEIPSPVAGTIVEILADEDDTVDVGAVIARIGDANAAAAPAEEEAAPAEEEEPVKEEPKKEEPKKEEPKKEAATTPAAASATVSASGDNVPYVTPLVRKLAEKHGVDLNTVTGTGIGGRIRKQDVLAAANGEAAPAEAAAPVSAWSTKSVDPEKAKLRGTTQKVNRIREITAMKTVEALQISAQLTQLHEVDMTRVAELRKKNKPAFIEKHGVNLTYLPFFVKAVVEALVSHPNVNASFNAKTKEMTYHSSVNLSIAVDTPAGLLTPVIHDAQDLSIPEIAKAIVDLADRSRNNKLKPNDLSGGTFTITNIGSEGALSDTPILVPPQAGILGTGAIVKRPVVITEDGIDSIAIRQMVFLPLTYDHQVVDGADAGRFLTTIKDRLETANFEGDLQL</sequence>